<evidence type="ECO:0000255" key="1">
    <source>
        <dbReference type="HAMAP-Rule" id="MF_01342"/>
    </source>
</evidence>
<evidence type="ECO:0000305" key="2"/>
<feature type="chain" id="PRO_0000062303" description="Large ribosomal subunit protein uL16c">
    <location>
        <begin position="1"/>
        <end position="136"/>
    </location>
</feature>
<reference key="1">
    <citation type="journal article" date="2002" name="DNA Res.">
        <title>Evolutionary re-organisation of a large operon in adzuki bean chloroplast DNA caused by inverted repeat movement.</title>
        <authorList>
            <person name="Perry A.S."/>
            <person name="Brennan S."/>
            <person name="Murphy D.J."/>
            <person name="Kavanagh T.A."/>
            <person name="Wolfe K.H."/>
        </authorList>
    </citation>
    <scope>NUCLEOTIDE SEQUENCE [GENOMIC DNA]</scope>
</reference>
<sequence>MLSNPQRTRFRKQHRGRMKGISYRGNHICFGRYALQALEPAWITSRQIEAGRRAMSRNVRRGGQIWVRIFPDKPVTVRPTETRMGSGKGFPEYWVAVVKPGKILYEMGGVPENIARKAISIASSKMPIRTQFIISG</sequence>
<accession>Q8MCA4</accession>
<comment type="subunit">
    <text evidence="1">Part of the 50S ribosomal subunit.</text>
</comment>
<comment type="subcellular location">
    <subcellularLocation>
        <location>Plastid</location>
        <location>Chloroplast</location>
    </subcellularLocation>
</comment>
<comment type="similarity">
    <text evidence="1">Belongs to the universal ribosomal protein uL16 family.</text>
</comment>
<gene>
    <name evidence="1" type="primary">rpl16</name>
</gene>
<dbReference type="EMBL" id="AF536225">
    <property type="protein sequence ID" value="AAN04889.1"/>
    <property type="molecule type" value="Genomic_DNA"/>
</dbReference>
<dbReference type="SMR" id="Q8MCA4"/>
<dbReference type="GO" id="GO:0009507">
    <property type="term" value="C:chloroplast"/>
    <property type="evidence" value="ECO:0007669"/>
    <property type="project" value="UniProtKB-SubCell"/>
</dbReference>
<dbReference type="GO" id="GO:0005762">
    <property type="term" value="C:mitochondrial large ribosomal subunit"/>
    <property type="evidence" value="ECO:0007669"/>
    <property type="project" value="TreeGrafter"/>
</dbReference>
<dbReference type="GO" id="GO:0019843">
    <property type="term" value="F:rRNA binding"/>
    <property type="evidence" value="ECO:0007669"/>
    <property type="project" value="InterPro"/>
</dbReference>
<dbReference type="GO" id="GO:0003735">
    <property type="term" value="F:structural constituent of ribosome"/>
    <property type="evidence" value="ECO:0007669"/>
    <property type="project" value="InterPro"/>
</dbReference>
<dbReference type="GO" id="GO:0032543">
    <property type="term" value="P:mitochondrial translation"/>
    <property type="evidence" value="ECO:0007669"/>
    <property type="project" value="TreeGrafter"/>
</dbReference>
<dbReference type="CDD" id="cd01433">
    <property type="entry name" value="Ribosomal_L16_L10e"/>
    <property type="match status" value="1"/>
</dbReference>
<dbReference type="FunFam" id="3.90.1170.10:FF:000001">
    <property type="entry name" value="50S ribosomal protein L16"/>
    <property type="match status" value="1"/>
</dbReference>
<dbReference type="Gene3D" id="3.90.1170.10">
    <property type="entry name" value="Ribosomal protein L10e/L16"/>
    <property type="match status" value="1"/>
</dbReference>
<dbReference type="HAMAP" id="MF_01342">
    <property type="entry name" value="Ribosomal_uL16"/>
    <property type="match status" value="1"/>
</dbReference>
<dbReference type="InterPro" id="IPR047873">
    <property type="entry name" value="Ribosomal_uL16"/>
</dbReference>
<dbReference type="InterPro" id="IPR000114">
    <property type="entry name" value="Ribosomal_uL16_bact-type"/>
</dbReference>
<dbReference type="InterPro" id="IPR020798">
    <property type="entry name" value="Ribosomal_uL16_CS"/>
</dbReference>
<dbReference type="InterPro" id="IPR016180">
    <property type="entry name" value="Ribosomal_uL16_dom"/>
</dbReference>
<dbReference type="InterPro" id="IPR036920">
    <property type="entry name" value="Ribosomal_uL16_sf"/>
</dbReference>
<dbReference type="NCBIfam" id="TIGR01164">
    <property type="entry name" value="rplP_bact"/>
    <property type="match status" value="1"/>
</dbReference>
<dbReference type="PANTHER" id="PTHR12220">
    <property type="entry name" value="50S/60S RIBOSOMAL PROTEIN L16"/>
    <property type="match status" value="1"/>
</dbReference>
<dbReference type="PANTHER" id="PTHR12220:SF13">
    <property type="entry name" value="LARGE RIBOSOMAL SUBUNIT PROTEIN UL16M"/>
    <property type="match status" value="1"/>
</dbReference>
<dbReference type="Pfam" id="PF00252">
    <property type="entry name" value="Ribosomal_L16"/>
    <property type="match status" value="1"/>
</dbReference>
<dbReference type="PRINTS" id="PR00060">
    <property type="entry name" value="RIBOSOMALL16"/>
</dbReference>
<dbReference type="SUPFAM" id="SSF54686">
    <property type="entry name" value="Ribosomal protein L16p/L10e"/>
    <property type="match status" value="1"/>
</dbReference>
<dbReference type="PROSITE" id="PS00586">
    <property type="entry name" value="RIBOSOMAL_L16_1"/>
    <property type="match status" value="1"/>
</dbReference>
<dbReference type="PROSITE" id="PS00701">
    <property type="entry name" value="RIBOSOMAL_L16_2"/>
    <property type="match status" value="1"/>
</dbReference>
<protein>
    <recommendedName>
        <fullName evidence="1">Large ribosomal subunit protein uL16c</fullName>
    </recommendedName>
    <alternativeName>
        <fullName evidence="2">50S ribosomal protein L16, chloroplastic</fullName>
    </alternativeName>
</protein>
<geneLocation type="chloroplast"/>
<keyword id="KW-0150">Chloroplast</keyword>
<keyword id="KW-0934">Plastid</keyword>
<keyword id="KW-0687">Ribonucleoprotein</keyword>
<keyword id="KW-0689">Ribosomal protein</keyword>
<proteinExistence type="inferred from homology"/>
<name>RK16_PHAAN</name>
<organism>
    <name type="scientific">Phaseolus angularis</name>
    <name type="common">Azuki bean</name>
    <name type="synonym">Vigna angularis</name>
    <dbReference type="NCBI Taxonomy" id="3914"/>
    <lineage>
        <taxon>Eukaryota</taxon>
        <taxon>Viridiplantae</taxon>
        <taxon>Streptophyta</taxon>
        <taxon>Embryophyta</taxon>
        <taxon>Tracheophyta</taxon>
        <taxon>Spermatophyta</taxon>
        <taxon>Magnoliopsida</taxon>
        <taxon>eudicotyledons</taxon>
        <taxon>Gunneridae</taxon>
        <taxon>Pentapetalae</taxon>
        <taxon>rosids</taxon>
        <taxon>fabids</taxon>
        <taxon>Fabales</taxon>
        <taxon>Fabaceae</taxon>
        <taxon>Papilionoideae</taxon>
        <taxon>50 kb inversion clade</taxon>
        <taxon>NPAAA clade</taxon>
        <taxon>indigoferoid/millettioid clade</taxon>
        <taxon>Phaseoleae</taxon>
        <taxon>Vigna</taxon>
    </lineage>
</organism>